<organism>
    <name type="scientific">Phytoplasma sp. (strain STRAWB1)</name>
    <dbReference type="NCBI Taxonomy" id="59889"/>
    <lineage>
        <taxon>Bacteria</taxon>
        <taxon>Bacillati</taxon>
        <taxon>Mycoplasmatota</taxon>
        <taxon>Mollicutes</taxon>
        <taxon>Acholeplasmatales</taxon>
        <taxon>Acholeplasmataceae</taxon>
        <taxon>Candidatus Phytoplasma</taxon>
    </lineage>
</organism>
<evidence type="ECO:0000250" key="1"/>
<evidence type="ECO:0000256" key="2">
    <source>
        <dbReference type="SAM" id="MobiDB-lite"/>
    </source>
</evidence>
<evidence type="ECO:0000305" key="3"/>
<proteinExistence type="inferred from homology"/>
<dbReference type="EMBL" id="U96615">
    <property type="protein sequence ID" value="AAC13664.1"/>
    <property type="molecule type" value="Genomic_DNA"/>
</dbReference>
<dbReference type="GO" id="GO:1990904">
    <property type="term" value="C:ribonucleoprotein complex"/>
    <property type="evidence" value="ECO:0007669"/>
    <property type="project" value="UniProtKB-KW"/>
</dbReference>
<dbReference type="GO" id="GO:0005840">
    <property type="term" value="C:ribosome"/>
    <property type="evidence" value="ECO:0007669"/>
    <property type="project" value="UniProtKB-KW"/>
</dbReference>
<dbReference type="GO" id="GO:0019843">
    <property type="term" value="F:rRNA binding"/>
    <property type="evidence" value="ECO:0007669"/>
    <property type="project" value="UniProtKB-KW"/>
</dbReference>
<feature type="chain" id="PRO_0000129874" description="Small ribosomal subunit protein uS19">
    <location>
        <begin position="1" status="less than"/>
        <end position="28"/>
    </location>
</feature>
<feature type="region of interest" description="Disordered" evidence="2">
    <location>
        <begin position="1"/>
        <end position="28"/>
    </location>
</feature>
<feature type="compositionally biased region" description="Basic and acidic residues" evidence="2">
    <location>
        <begin position="11"/>
        <end position="28"/>
    </location>
</feature>
<feature type="non-terminal residue">
    <location>
        <position position="1"/>
    </location>
</feature>
<protein>
    <recommendedName>
        <fullName evidence="3">Small ribosomal subunit protein uS19</fullName>
    </recommendedName>
    <alternativeName>
        <fullName>30S ribosomal protein S19</fullName>
    </alternativeName>
</protein>
<keyword id="KW-0687">Ribonucleoprotein</keyword>
<keyword id="KW-0689">Ribosomal protein</keyword>
<keyword id="KW-0694">RNA-binding</keyword>
<keyword id="KW-0699">rRNA-binding</keyword>
<reference key="1">
    <citation type="journal article" date="1998" name="Int. J. Syst. Bacteriol.">
        <title>Classification of new phytoplasmas associated with diseases of strawberry in Florida, based on analysis of 16S rRNA and ribosomal protein gene operon sequences.</title>
        <authorList>
            <person name="Jomantiene R."/>
            <person name="Davis R.E."/>
            <person name="Maas J."/>
            <person name="Dally E.L."/>
        </authorList>
    </citation>
    <scope>NUCLEOTIDE SEQUENCE [GENOMIC DNA]</scope>
</reference>
<sequence>LGEFAPTRTYRGHDKKDNKKDNKKGQKK</sequence>
<accession>O66093</accession>
<comment type="function">
    <text evidence="1">Protein S19 forms a complex with S13 that binds strongly to the 16S ribosomal RNA.</text>
</comment>
<comment type="similarity">
    <text evidence="3">Belongs to the universal ribosomal protein uS19 family.</text>
</comment>
<name>RS19_PHYS1</name>
<gene>
    <name type="primary">rpsS</name>
</gene>